<reference key="1">
    <citation type="journal article" date="1997" name="Nature">
        <title>The complete genome sequence of the hyperthermophilic, sulphate-reducing archaeon Archaeoglobus fulgidus.</title>
        <authorList>
            <person name="Klenk H.-P."/>
            <person name="Clayton R.A."/>
            <person name="Tomb J.-F."/>
            <person name="White O."/>
            <person name="Nelson K.E."/>
            <person name="Ketchum K.A."/>
            <person name="Dodson R.J."/>
            <person name="Gwinn M.L."/>
            <person name="Hickey E.K."/>
            <person name="Peterson J.D."/>
            <person name="Richardson D.L."/>
            <person name="Kerlavage A.R."/>
            <person name="Graham D.E."/>
            <person name="Kyrpides N.C."/>
            <person name="Fleischmann R.D."/>
            <person name="Quackenbush J."/>
            <person name="Lee N.H."/>
            <person name="Sutton G.G."/>
            <person name="Gill S.R."/>
            <person name="Kirkness E.F."/>
            <person name="Dougherty B.A."/>
            <person name="McKenney K."/>
            <person name="Adams M.D."/>
            <person name="Loftus B.J."/>
            <person name="Peterson S.N."/>
            <person name="Reich C.I."/>
            <person name="McNeil L.K."/>
            <person name="Badger J.H."/>
            <person name="Glodek A."/>
            <person name="Zhou L."/>
            <person name="Overbeek R."/>
            <person name="Gocayne J.D."/>
            <person name="Weidman J.F."/>
            <person name="McDonald L.A."/>
            <person name="Utterback T.R."/>
            <person name="Cotton M.D."/>
            <person name="Spriggs T."/>
            <person name="Artiach P."/>
            <person name="Kaine B.P."/>
            <person name="Sykes S.M."/>
            <person name="Sadow P.W."/>
            <person name="D'Andrea K.P."/>
            <person name="Bowman C."/>
            <person name="Fujii C."/>
            <person name="Garland S.A."/>
            <person name="Mason T.M."/>
            <person name="Olsen G.J."/>
            <person name="Fraser C.M."/>
            <person name="Smith H.O."/>
            <person name="Woese C.R."/>
            <person name="Venter J.C."/>
        </authorList>
    </citation>
    <scope>NUCLEOTIDE SEQUENCE [LARGE SCALE GENOMIC DNA]</scope>
    <source>
        <strain>ATCC 49558 / DSM 4304 / JCM 9628 / NBRC 100126 / VC-16</strain>
    </source>
</reference>
<name>Y611_ARCFU</name>
<keyword id="KW-1185">Reference proteome</keyword>
<gene>
    <name type="ordered locus">AF_0611</name>
</gene>
<organism>
    <name type="scientific">Archaeoglobus fulgidus (strain ATCC 49558 / DSM 4304 / JCM 9628 / NBRC 100126 / VC-16)</name>
    <dbReference type="NCBI Taxonomy" id="224325"/>
    <lineage>
        <taxon>Archaea</taxon>
        <taxon>Methanobacteriati</taxon>
        <taxon>Methanobacteriota</taxon>
        <taxon>Archaeoglobi</taxon>
        <taxon>Archaeoglobales</taxon>
        <taxon>Archaeoglobaceae</taxon>
        <taxon>Archaeoglobus</taxon>
    </lineage>
</organism>
<sequence>MKHKIKLKGSFSLNEKDILDFHPWVKPLLEEVRNRGWNYEFSDVKAEVLVELDLDELKLDLRYYPPRLERFEEGGTYEISAEVGSEPPAVLKVLSIESFKVRVSTKNCWNAAEIDPFKREVNSIKDVLWAFGEEVDKLSQAREVYEVARWLIEKGFKPANNYVIKDYKKLVDMFEKPYKFAVTLEIAVEDENKVPGWEELKKELSKFFYERGTFGGAENGSV</sequence>
<protein>
    <recommendedName>
        <fullName>Uncharacterized protein AF_0611</fullName>
    </recommendedName>
</protein>
<feature type="chain" id="PRO_0000127898" description="Uncharacterized protein AF_0611">
    <location>
        <begin position="1"/>
        <end position="222"/>
    </location>
</feature>
<accession>O29644</accession>
<dbReference type="EMBL" id="AE000782">
    <property type="protein sequence ID" value="AAB90626.1"/>
    <property type="molecule type" value="Genomic_DNA"/>
</dbReference>
<dbReference type="PIR" id="C69326">
    <property type="entry name" value="C69326"/>
</dbReference>
<dbReference type="RefSeq" id="WP_010878115.1">
    <property type="nucleotide sequence ID" value="NC_000917.1"/>
</dbReference>
<dbReference type="PaxDb" id="224325-AF_0611"/>
<dbReference type="EnsemblBacteria" id="AAB90626">
    <property type="protein sequence ID" value="AAB90626"/>
    <property type="gene ID" value="AF_0611"/>
</dbReference>
<dbReference type="KEGG" id="afu:AF_0611"/>
<dbReference type="eggNOG" id="arCOG10386">
    <property type="taxonomic scope" value="Archaea"/>
</dbReference>
<dbReference type="HOGENOM" id="CLU_1363607_0_0_2"/>
<dbReference type="OrthoDB" id="377926at2157"/>
<dbReference type="Proteomes" id="UP000002199">
    <property type="component" value="Chromosome"/>
</dbReference>
<proteinExistence type="predicted"/>